<sequence length="245" mass="28436">MKIDYLTLFPEMFEGVLNHSILKRAQDKGIINVNTINFRDYSINKHNQVDDYPFGGGQGMVLKPEPVFNAMEDINRNEHTRVILMCPQGRPFTQEIAQELSEAKHIVFICGHYEGYDERIRKHLVTDEISMGDYVLTGGELPAMTMTDAIVRLIPGVLGNQASHQDDSFSDGLLEFPQYTRPREYKNMSVPEVLLSGNHAHIDQWRHEQKLIRTYEKRPDLLEQYPLTEKDREILETYKKKLKND</sequence>
<organism>
    <name type="scientific">Staphylococcus epidermidis (strain ATCC 35984 / DSM 28319 / BCRC 17069 / CCUG 31568 / BM 3577 / RP62A)</name>
    <dbReference type="NCBI Taxonomy" id="176279"/>
    <lineage>
        <taxon>Bacteria</taxon>
        <taxon>Bacillati</taxon>
        <taxon>Bacillota</taxon>
        <taxon>Bacilli</taxon>
        <taxon>Bacillales</taxon>
        <taxon>Staphylococcaceae</taxon>
        <taxon>Staphylococcus</taxon>
    </lineage>
</organism>
<reference key="1">
    <citation type="journal article" date="2005" name="J. Bacteriol.">
        <title>Insights on evolution of virulence and resistance from the complete genome analysis of an early methicillin-resistant Staphylococcus aureus strain and a biofilm-producing methicillin-resistant Staphylococcus epidermidis strain.</title>
        <authorList>
            <person name="Gill S.R."/>
            <person name="Fouts D.E."/>
            <person name="Archer G.L."/>
            <person name="Mongodin E.F."/>
            <person name="DeBoy R.T."/>
            <person name="Ravel J."/>
            <person name="Paulsen I.T."/>
            <person name="Kolonay J.F."/>
            <person name="Brinkac L.M."/>
            <person name="Beanan M.J."/>
            <person name="Dodson R.J."/>
            <person name="Daugherty S.C."/>
            <person name="Madupu R."/>
            <person name="Angiuoli S.V."/>
            <person name="Durkin A.S."/>
            <person name="Haft D.H."/>
            <person name="Vamathevan J.J."/>
            <person name="Khouri H."/>
            <person name="Utterback T.R."/>
            <person name="Lee C."/>
            <person name="Dimitrov G."/>
            <person name="Jiang L."/>
            <person name="Qin H."/>
            <person name="Weidman J."/>
            <person name="Tran K."/>
            <person name="Kang K.H."/>
            <person name="Hance I.R."/>
            <person name="Nelson K.E."/>
            <person name="Fraser C.M."/>
        </authorList>
    </citation>
    <scope>NUCLEOTIDE SEQUENCE [LARGE SCALE GENOMIC DNA]</scope>
    <source>
        <strain>ATCC 35984 / DSM 28319 / BCRC 17069 / CCUG 31568 / BM 3577 / RP62A</strain>
    </source>
</reference>
<proteinExistence type="inferred from homology"/>
<name>TRMD_STAEQ</name>
<comment type="function">
    <text evidence="1">Specifically methylates guanosine-37 in various tRNAs.</text>
</comment>
<comment type="catalytic activity">
    <reaction evidence="1">
        <text>guanosine(37) in tRNA + S-adenosyl-L-methionine = N(1)-methylguanosine(37) in tRNA + S-adenosyl-L-homocysteine + H(+)</text>
        <dbReference type="Rhea" id="RHEA:36899"/>
        <dbReference type="Rhea" id="RHEA-COMP:10145"/>
        <dbReference type="Rhea" id="RHEA-COMP:10147"/>
        <dbReference type="ChEBI" id="CHEBI:15378"/>
        <dbReference type="ChEBI" id="CHEBI:57856"/>
        <dbReference type="ChEBI" id="CHEBI:59789"/>
        <dbReference type="ChEBI" id="CHEBI:73542"/>
        <dbReference type="ChEBI" id="CHEBI:74269"/>
        <dbReference type="EC" id="2.1.1.228"/>
    </reaction>
</comment>
<comment type="subunit">
    <text evidence="1">Homodimer.</text>
</comment>
<comment type="subcellular location">
    <subcellularLocation>
        <location evidence="1">Cytoplasm</location>
    </subcellularLocation>
</comment>
<comment type="similarity">
    <text evidence="1">Belongs to the RNA methyltransferase TrmD family.</text>
</comment>
<accession>Q5HPV1</accession>
<gene>
    <name evidence="1" type="primary">trmD</name>
    <name type="ordered locus">SERP0806</name>
</gene>
<feature type="chain" id="PRO_0000060463" description="tRNA (guanine-N(1)-)-methyltransferase">
    <location>
        <begin position="1"/>
        <end position="245"/>
    </location>
</feature>
<feature type="binding site" evidence="1">
    <location>
        <position position="111"/>
    </location>
    <ligand>
        <name>S-adenosyl-L-methionine</name>
        <dbReference type="ChEBI" id="CHEBI:59789"/>
    </ligand>
</feature>
<feature type="binding site" evidence="1">
    <location>
        <begin position="131"/>
        <end position="136"/>
    </location>
    <ligand>
        <name>S-adenosyl-L-methionine</name>
        <dbReference type="ChEBI" id="CHEBI:59789"/>
    </ligand>
</feature>
<keyword id="KW-0963">Cytoplasm</keyword>
<keyword id="KW-0489">Methyltransferase</keyword>
<keyword id="KW-1185">Reference proteome</keyword>
<keyword id="KW-0949">S-adenosyl-L-methionine</keyword>
<keyword id="KW-0808">Transferase</keyword>
<keyword id="KW-0819">tRNA processing</keyword>
<dbReference type="EC" id="2.1.1.228" evidence="1"/>
<dbReference type="EMBL" id="CP000029">
    <property type="protein sequence ID" value="AAW54145.1"/>
    <property type="molecule type" value="Genomic_DNA"/>
</dbReference>
<dbReference type="RefSeq" id="WP_002446277.1">
    <property type="nucleotide sequence ID" value="NC_002976.3"/>
</dbReference>
<dbReference type="SMR" id="Q5HPV1"/>
<dbReference type="STRING" id="176279.SERP0806"/>
<dbReference type="KEGG" id="ser:SERP0806"/>
<dbReference type="eggNOG" id="COG0336">
    <property type="taxonomic scope" value="Bacteria"/>
</dbReference>
<dbReference type="HOGENOM" id="CLU_047363_0_1_9"/>
<dbReference type="Proteomes" id="UP000000531">
    <property type="component" value="Chromosome"/>
</dbReference>
<dbReference type="GO" id="GO:0005829">
    <property type="term" value="C:cytosol"/>
    <property type="evidence" value="ECO:0007669"/>
    <property type="project" value="TreeGrafter"/>
</dbReference>
<dbReference type="GO" id="GO:0052906">
    <property type="term" value="F:tRNA (guanine(37)-N1)-methyltransferase activity"/>
    <property type="evidence" value="ECO:0007669"/>
    <property type="project" value="UniProtKB-UniRule"/>
</dbReference>
<dbReference type="GO" id="GO:0002939">
    <property type="term" value="P:tRNA N1-guanine methylation"/>
    <property type="evidence" value="ECO:0007669"/>
    <property type="project" value="TreeGrafter"/>
</dbReference>
<dbReference type="CDD" id="cd18080">
    <property type="entry name" value="TrmD-like"/>
    <property type="match status" value="1"/>
</dbReference>
<dbReference type="FunFam" id="1.10.1270.20:FF:000001">
    <property type="entry name" value="tRNA (guanine-N(1)-)-methyltransferase"/>
    <property type="match status" value="1"/>
</dbReference>
<dbReference type="FunFam" id="3.40.1280.10:FF:000001">
    <property type="entry name" value="tRNA (guanine-N(1)-)-methyltransferase"/>
    <property type="match status" value="1"/>
</dbReference>
<dbReference type="Gene3D" id="3.40.1280.10">
    <property type="match status" value="1"/>
</dbReference>
<dbReference type="Gene3D" id="1.10.1270.20">
    <property type="entry name" value="tRNA(m1g37)methyltransferase, domain 2"/>
    <property type="match status" value="1"/>
</dbReference>
<dbReference type="HAMAP" id="MF_00605">
    <property type="entry name" value="TrmD"/>
    <property type="match status" value="1"/>
</dbReference>
<dbReference type="InterPro" id="IPR029028">
    <property type="entry name" value="Alpha/beta_knot_MTases"/>
</dbReference>
<dbReference type="InterPro" id="IPR023148">
    <property type="entry name" value="tRNA_m1G_MeTrfase_C_sf"/>
</dbReference>
<dbReference type="InterPro" id="IPR002649">
    <property type="entry name" value="tRNA_m1G_MeTrfase_TrmD"/>
</dbReference>
<dbReference type="InterPro" id="IPR029026">
    <property type="entry name" value="tRNA_m1G_MTases_N"/>
</dbReference>
<dbReference type="InterPro" id="IPR016009">
    <property type="entry name" value="tRNA_MeTrfase_TRMD/TRM10"/>
</dbReference>
<dbReference type="NCBIfam" id="NF000648">
    <property type="entry name" value="PRK00026.1"/>
    <property type="match status" value="1"/>
</dbReference>
<dbReference type="NCBIfam" id="TIGR00088">
    <property type="entry name" value="trmD"/>
    <property type="match status" value="1"/>
</dbReference>
<dbReference type="PANTHER" id="PTHR46417">
    <property type="entry name" value="TRNA (GUANINE-N(1)-)-METHYLTRANSFERASE"/>
    <property type="match status" value="1"/>
</dbReference>
<dbReference type="PANTHER" id="PTHR46417:SF1">
    <property type="entry name" value="TRNA (GUANINE-N(1)-)-METHYLTRANSFERASE"/>
    <property type="match status" value="1"/>
</dbReference>
<dbReference type="Pfam" id="PF01746">
    <property type="entry name" value="tRNA_m1G_MT"/>
    <property type="match status" value="1"/>
</dbReference>
<dbReference type="PIRSF" id="PIRSF000386">
    <property type="entry name" value="tRNA_mtase"/>
    <property type="match status" value="1"/>
</dbReference>
<dbReference type="SUPFAM" id="SSF75217">
    <property type="entry name" value="alpha/beta knot"/>
    <property type="match status" value="1"/>
</dbReference>
<evidence type="ECO:0000255" key="1">
    <source>
        <dbReference type="HAMAP-Rule" id="MF_00605"/>
    </source>
</evidence>
<protein>
    <recommendedName>
        <fullName evidence="1">tRNA (guanine-N(1)-)-methyltransferase</fullName>
        <ecNumber evidence="1">2.1.1.228</ecNumber>
    </recommendedName>
    <alternativeName>
        <fullName evidence="1">M1G-methyltransferase</fullName>
    </alternativeName>
    <alternativeName>
        <fullName evidence="1">tRNA [GM37] methyltransferase</fullName>
    </alternativeName>
</protein>